<evidence type="ECO:0000255" key="1">
    <source>
        <dbReference type="HAMAP-Rule" id="MF_01537"/>
    </source>
</evidence>
<comment type="function">
    <text evidence="1">Catalyzes the phosphorolysis of diverse nucleosides, yielding D-ribose 1-phosphate and the respective free bases. Can use uridine, adenosine, guanosine, cytidine, thymidine, inosine and xanthosine as substrates. Also catalyzes the reverse reactions.</text>
</comment>
<comment type="catalytic activity">
    <reaction evidence="1">
        <text>a purine D-ribonucleoside + phosphate = a purine nucleobase + alpha-D-ribose 1-phosphate</text>
        <dbReference type="Rhea" id="RHEA:19805"/>
        <dbReference type="ChEBI" id="CHEBI:26386"/>
        <dbReference type="ChEBI" id="CHEBI:43474"/>
        <dbReference type="ChEBI" id="CHEBI:57720"/>
        <dbReference type="ChEBI" id="CHEBI:142355"/>
        <dbReference type="EC" id="2.4.2.1"/>
    </reaction>
</comment>
<comment type="catalytic activity">
    <reaction evidence="1">
        <text>adenosine + phosphate = alpha-D-ribose 1-phosphate + adenine</text>
        <dbReference type="Rhea" id="RHEA:27642"/>
        <dbReference type="ChEBI" id="CHEBI:16335"/>
        <dbReference type="ChEBI" id="CHEBI:16708"/>
        <dbReference type="ChEBI" id="CHEBI:43474"/>
        <dbReference type="ChEBI" id="CHEBI:57720"/>
        <dbReference type="EC" id="2.4.2.1"/>
    </reaction>
</comment>
<comment type="catalytic activity">
    <reaction evidence="1">
        <text>cytidine + phosphate = cytosine + alpha-D-ribose 1-phosphate</text>
        <dbReference type="Rhea" id="RHEA:52540"/>
        <dbReference type="ChEBI" id="CHEBI:16040"/>
        <dbReference type="ChEBI" id="CHEBI:17562"/>
        <dbReference type="ChEBI" id="CHEBI:43474"/>
        <dbReference type="ChEBI" id="CHEBI:57720"/>
        <dbReference type="EC" id="2.4.2.2"/>
    </reaction>
</comment>
<comment type="catalytic activity">
    <reaction evidence="1">
        <text>guanosine + phosphate = alpha-D-ribose 1-phosphate + guanine</text>
        <dbReference type="Rhea" id="RHEA:13233"/>
        <dbReference type="ChEBI" id="CHEBI:16235"/>
        <dbReference type="ChEBI" id="CHEBI:16750"/>
        <dbReference type="ChEBI" id="CHEBI:43474"/>
        <dbReference type="ChEBI" id="CHEBI:57720"/>
        <dbReference type="EC" id="2.4.2.1"/>
    </reaction>
</comment>
<comment type="catalytic activity">
    <reaction evidence="1">
        <text>inosine + phosphate = alpha-D-ribose 1-phosphate + hypoxanthine</text>
        <dbReference type="Rhea" id="RHEA:27646"/>
        <dbReference type="ChEBI" id="CHEBI:17368"/>
        <dbReference type="ChEBI" id="CHEBI:17596"/>
        <dbReference type="ChEBI" id="CHEBI:43474"/>
        <dbReference type="ChEBI" id="CHEBI:57720"/>
        <dbReference type="EC" id="2.4.2.1"/>
    </reaction>
</comment>
<comment type="catalytic activity">
    <reaction evidence="1">
        <text>thymidine + phosphate = 2-deoxy-alpha-D-ribose 1-phosphate + thymine</text>
        <dbReference type="Rhea" id="RHEA:16037"/>
        <dbReference type="ChEBI" id="CHEBI:17748"/>
        <dbReference type="ChEBI" id="CHEBI:17821"/>
        <dbReference type="ChEBI" id="CHEBI:43474"/>
        <dbReference type="ChEBI" id="CHEBI:57259"/>
        <dbReference type="EC" id="2.4.2.2"/>
    </reaction>
</comment>
<comment type="catalytic activity">
    <reaction evidence="1">
        <text>uridine + phosphate = alpha-D-ribose 1-phosphate + uracil</text>
        <dbReference type="Rhea" id="RHEA:24388"/>
        <dbReference type="ChEBI" id="CHEBI:16704"/>
        <dbReference type="ChEBI" id="CHEBI:17568"/>
        <dbReference type="ChEBI" id="CHEBI:43474"/>
        <dbReference type="ChEBI" id="CHEBI:57720"/>
        <dbReference type="EC" id="2.4.2.2"/>
    </reaction>
</comment>
<comment type="catalytic activity">
    <reaction evidence="1">
        <text>xanthosine + phosphate = alpha-D-ribose 1-phosphate + xanthine</text>
        <dbReference type="Rhea" id="RHEA:27638"/>
        <dbReference type="ChEBI" id="CHEBI:17712"/>
        <dbReference type="ChEBI" id="CHEBI:18107"/>
        <dbReference type="ChEBI" id="CHEBI:43474"/>
        <dbReference type="ChEBI" id="CHEBI:57720"/>
        <dbReference type="EC" id="2.4.2.1"/>
    </reaction>
</comment>
<comment type="similarity">
    <text evidence="1">Belongs to the nucleoside phosphorylase PpnP family.</text>
</comment>
<dbReference type="EC" id="2.4.2.1" evidence="1"/>
<dbReference type="EC" id="2.4.2.2" evidence="1"/>
<dbReference type="EMBL" id="CP000352">
    <property type="protein sequence ID" value="ABF09774.1"/>
    <property type="molecule type" value="Genomic_DNA"/>
</dbReference>
<dbReference type="RefSeq" id="WP_008644958.1">
    <property type="nucleotide sequence ID" value="NC_007973.1"/>
</dbReference>
<dbReference type="SMR" id="Q1LJA2"/>
<dbReference type="STRING" id="266264.Rmet_2901"/>
<dbReference type="KEGG" id="rme:Rmet_2901"/>
<dbReference type="eggNOG" id="COG3123">
    <property type="taxonomic scope" value="Bacteria"/>
</dbReference>
<dbReference type="HOGENOM" id="CLU_157874_1_0_4"/>
<dbReference type="Proteomes" id="UP000002429">
    <property type="component" value="Chromosome"/>
</dbReference>
<dbReference type="GO" id="GO:0005829">
    <property type="term" value="C:cytosol"/>
    <property type="evidence" value="ECO:0007669"/>
    <property type="project" value="TreeGrafter"/>
</dbReference>
<dbReference type="GO" id="GO:0047975">
    <property type="term" value="F:guanosine phosphorylase activity"/>
    <property type="evidence" value="ECO:0007669"/>
    <property type="project" value="UniProtKB-EC"/>
</dbReference>
<dbReference type="GO" id="GO:0004731">
    <property type="term" value="F:purine-nucleoside phosphorylase activity"/>
    <property type="evidence" value="ECO:0007669"/>
    <property type="project" value="UniProtKB-UniRule"/>
</dbReference>
<dbReference type="GO" id="GO:0009032">
    <property type="term" value="F:thymidine phosphorylase activity"/>
    <property type="evidence" value="ECO:0007669"/>
    <property type="project" value="UniProtKB-EC"/>
</dbReference>
<dbReference type="GO" id="GO:0004850">
    <property type="term" value="F:uridine phosphorylase activity"/>
    <property type="evidence" value="ECO:0007669"/>
    <property type="project" value="UniProtKB-EC"/>
</dbReference>
<dbReference type="CDD" id="cd20296">
    <property type="entry name" value="cupin_PpnP-like"/>
    <property type="match status" value="1"/>
</dbReference>
<dbReference type="Gene3D" id="2.60.120.10">
    <property type="entry name" value="Jelly Rolls"/>
    <property type="match status" value="1"/>
</dbReference>
<dbReference type="HAMAP" id="MF_01537">
    <property type="entry name" value="Nucleos_phosphorylase_PpnP"/>
    <property type="match status" value="1"/>
</dbReference>
<dbReference type="InterPro" id="IPR009664">
    <property type="entry name" value="Ppnp"/>
</dbReference>
<dbReference type="InterPro" id="IPR014710">
    <property type="entry name" value="RmlC-like_jellyroll"/>
</dbReference>
<dbReference type="InterPro" id="IPR011051">
    <property type="entry name" value="RmlC_Cupin_sf"/>
</dbReference>
<dbReference type="PANTHER" id="PTHR36540">
    <property type="entry name" value="PYRIMIDINE/PURINE NUCLEOSIDE PHOSPHORYLASE"/>
    <property type="match status" value="1"/>
</dbReference>
<dbReference type="PANTHER" id="PTHR36540:SF1">
    <property type="entry name" value="PYRIMIDINE_PURINE NUCLEOSIDE PHOSPHORYLASE"/>
    <property type="match status" value="1"/>
</dbReference>
<dbReference type="Pfam" id="PF06865">
    <property type="entry name" value="Ppnp"/>
    <property type="match status" value="1"/>
</dbReference>
<dbReference type="SUPFAM" id="SSF51182">
    <property type="entry name" value="RmlC-like cupins"/>
    <property type="match status" value="1"/>
</dbReference>
<feature type="chain" id="PRO_0000298719" description="Pyrimidine/purine nucleoside phosphorylase">
    <location>
        <begin position="1"/>
        <end position="103"/>
    </location>
</feature>
<proteinExistence type="inferred from homology"/>
<organism>
    <name type="scientific">Cupriavidus metallidurans (strain ATCC 43123 / DSM 2839 / NBRC 102507 / CH34)</name>
    <name type="common">Ralstonia metallidurans</name>
    <dbReference type="NCBI Taxonomy" id="266264"/>
    <lineage>
        <taxon>Bacteria</taxon>
        <taxon>Pseudomonadati</taxon>
        <taxon>Pseudomonadota</taxon>
        <taxon>Betaproteobacteria</taxon>
        <taxon>Burkholderiales</taxon>
        <taxon>Burkholderiaceae</taxon>
        <taxon>Cupriavidus</taxon>
    </lineage>
</organism>
<accession>Q1LJA2</accession>
<keyword id="KW-0328">Glycosyltransferase</keyword>
<keyword id="KW-1185">Reference proteome</keyword>
<keyword id="KW-0808">Transferase</keyword>
<name>PPNP_CUPMC</name>
<sequence length="103" mass="11205">MSQFDNVSVVKKANLYFDGKCVSHTVTFADGTRKTLGVIFPAALTFNTGAPEIMEINAGVCRVRLAGSDEWKTYGAGQQFDVPGNSSFDIEVTETLDYVCHFG</sequence>
<reference key="1">
    <citation type="journal article" date="2010" name="PLoS ONE">
        <title>The complete genome sequence of Cupriavidus metallidurans strain CH34, a master survivalist in harsh and anthropogenic environments.</title>
        <authorList>
            <person name="Janssen P.J."/>
            <person name="Van Houdt R."/>
            <person name="Moors H."/>
            <person name="Monsieurs P."/>
            <person name="Morin N."/>
            <person name="Michaux A."/>
            <person name="Benotmane M.A."/>
            <person name="Leys N."/>
            <person name="Vallaeys T."/>
            <person name="Lapidus A."/>
            <person name="Monchy S."/>
            <person name="Medigue C."/>
            <person name="Taghavi S."/>
            <person name="McCorkle S."/>
            <person name="Dunn J."/>
            <person name="van der Lelie D."/>
            <person name="Mergeay M."/>
        </authorList>
    </citation>
    <scope>NUCLEOTIDE SEQUENCE [LARGE SCALE GENOMIC DNA]</scope>
    <source>
        <strain>ATCC 43123 / DSM 2839 / NBRC 102507 / CH34</strain>
    </source>
</reference>
<gene>
    <name evidence="1" type="primary">ppnP</name>
    <name type="ordered locus">Rmet_2901</name>
</gene>
<protein>
    <recommendedName>
        <fullName evidence="1">Pyrimidine/purine nucleoside phosphorylase</fullName>
        <ecNumber evidence="1">2.4.2.1</ecNumber>
        <ecNumber evidence="1">2.4.2.2</ecNumber>
    </recommendedName>
    <alternativeName>
        <fullName evidence="1">Adenosine phosphorylase</fullName>
    </alternativeName>
    <alternativeName>
        <fullName evidence="1">Cytidine phosphorylase</fullName>
    </alternativeName>
    <alternativeName>
        <fullName evidence="1">Guanosine phosphorylase</fullName>
    </alternativeName>
    <alternativeName>
        <fullName evidence="1">Inosine phosphorylase</fullName>
    </alternativeName>
    <alternativeName>
        <fullName evidence="1">Thymidine phosphorylase</fullName>
    </alternativeName>
    <alternativeName>
        <fullName evidence="1">Uridine phosphorylase</fullName>
    </alternativeName>
    <alternativeName>
        <fullName evidence="1">Xanthosine phosphorylase</fullName>
    </alternativeName>
</protein>